<comment type="function">
    <text evidence="1">Zinc phosphodiesterase, which displays some tRNA 3'-processing endonuclease activity. Probably involved in tRNA maturation, by removing a 3'-trailer from precursor tRNA.</text>
</comment>
<comment type="catalytic activity">
    <reaction evidence="1">
        <text>Endonucleolytic cleavage of RNA, removing extra 3' nucleotides from tRNA precursor, generating 3' termini of tRNAs. A 3'-hydroxy group is left at the tRNA terminus and a 5'-phosphoryl group is left at the trailer molecule.</text>
        <dbReference type="EC" id="3.1.26.11"/>
    </reaction>
</comment>
<comment type="cofactor">
    <cofactor evidence="1">
        <name>Zn(2+)</name>
        <dbReference type="ChEBI" id="CHEBI:29105"/>
    </cofactor>
    <text evidence="1">Binds 2 Zn(2+) ions.</text>
</comment>
<comment type="subunit">
    <text evidence="1">Homodimer.</text>
</comment>
<comment type="similarity">
    <text evidence="1">Belongs to the RNase Z family.</text>
</comment>
<feature type="chain" id="PRO_0000155910" description="Ribonuclease Z">
    <location>
        <begin position="1"/>
        <end position="309"/>
    </location>
</feature>
<feature type="active site" description="Proton acceptor" evidence="1">
    <location>
        <position position="67"/>
    </location>
</feature>
<feature type="binding site" evidence="1">
    <location>
        <position position="63"/>
    </location>
    <ligand>
        <name>Zn(2+)</name>
        <dbReference type="ChEBI" id="CHEBI:29105"/>
        <label>1</label>
        <note>catalytic</note>
    </ligand>
</feature>
<feature type="binding site" evidence="1">
    <location>
        <position position="65"/>
    </location>
    <ligand>
        <name>Zn(2+)</name>
        <dbReference type="ChEBI" id="CHEBI:29105"/>
        <label>1</label>
        <note>catalytic</note>
    </ligand>
</feature>
<feature type="binding site" evidence="1">
    <location>
        <position position="67"/>
    </location>
    <ligand>
        <name>Zn(2+)</name>
        <dbReference type="ChEBI" id="CHEBI:29105"/>
        <label>2</label>
        <note>catalytic</note>
    </ligand>
</feature>
<feature type="binding site" evidence="1">
    <location>
        <position position="68"/>
    </location>
    <ligand>
        <name>Zn(2+)</name>
        <dbReference type="ChEBI" id="CHEBI:29105"/>
        <label>2</label>
        <note>catalytic</note>
    </ligand>
</feature>
<feature type="binding site" evidence="1">
    <location>
        <position position="145"/>
    </location>
    <ligand>
        <name>Zn(2+)</name>
        <dbReference type="ChEBI" id="CHEBI:29105"/>
        <label>1</label>
        <note>catalytic</note>
    </ligand>
</feature>
<feature type="binding site" evidence="1">
    <location>
        <position position="216"/>
    </location>
    <ligand>
        <name>Zn(2+)</name>
        <dbReference type="ChEBI" id="CHEBI:29105"/>
        <label>1</label>
        <note>catalytic</note>
    </ligand>
</feature>
<feature type="binding site" evidence="1">
    <location>
        <position position="216"/>
    </location>
    <ligand>
        <name>Zn(2+)</name>
        <dbReference type="ChEBI" id="CHEBI:29105"/>
        <label>2</label>
        <note>catalytic</note>
    </ligand>
</feature>
<feature type="binding site" evidence="1">
    <location>
        <position position="274"/>
    </location>
    <ligand>
        <name>Zn(2+)</name>
        <dbReference type="ChEBI" id="CHEBI:29105"/>
        <label>2</label>
        <note>catalytic</note>
    </ligand>
</feature>
<evidence type="ECO:0000255" key="1">
    <source>
        <dbReference type="HAMAP-Rule" id="MF_01818"/>
    </source>
</evidence>
<protein>
    <recommendedName>
        <fullName evidence="1">Ribonuclease Z</fullName>
        <shortName evidence="1">RNase Z</shortName>
        <ecNumber evidence="1">3.1.26.11</ecNumber>
    </recommendedName>
    <alternativeName>
        <fullName evidence="1">tRNA 3 endonuclease</fullName>
    </alternativeName>
    <alternativeName>
        <fullName evidence="1">tRNase Z</fullName>
    </alternativeName>
</protein>
<keyword id="KW-0255">Endonuclease</keyword>
<keyword id="KW-0378">Hydrolase</keyword>
<keyword id="KW-0479">Metal-binding</keyword>
<keyword id="KW-0540">Nuclease</keyword>
<keyword id="KW-0819">tRNA processing</keyword>
<keyword id="KW-0862">Zinc</keyword>
<proteinExistence type="inferred from homology"/>
<organism>
    <name type="scientific">Streptococcus pyogenes serotype M6 (strain ATCC BAA-946 / MGAS10394)</name>
    <dbReference type="NCBI Taxonomy" id="286636"/>
    <lineage>
        <taxon>Bacteria</taxon>
        <taxon>Bacillati</taxon>
        <taxon>Bacillota</taxon>
        <taxon>Bacilli</taxon>
        <taxon>Lactobacillales</taxon>
        <taxon>Streptococcaceae</taxon>
        <taxon>Streptococcus</taxon>
    </lineage>
</organism>
<dbReference type="EC" id="3.1.26.11" evidence="1"/>
<dbReference type="EMBL" id="CP000003">
    <property type="protein sequence ID" value="AAT86886.1"/>
    <property type="molecule type" value="Genomic_DNA"/>
</dbReference>
<dbReference type="RefSeq" id="WP_009881223.1">
    <property type="nucleotide sequence ID" value="NC_006086.1"/>
</dbReference>
<dbReference type="SMR" id="Q5XCH7"/>
<dbReference type="GeneID" id="69900974"/>
<dbReference type="KEGG" id="spa:M6_Spy0751"/>
<dbReference type="HOGENOM" id="CLU_031317_2_0_9"/>
<dbReference type="Proteomes" id="UP000001167">
    <property type="component" value="Chromosome"/>
</dbReference>
<dbReference type="GO" id="GO:0042781">
    <property type="term" value="F:3'-tRNA processing endoribonuclease activity"/>
    <property type="evidence" value="ECO:0007669"/>
    <property type="project" value="UniProtKB-UniRule"/>
</dbReference>
<dbReference type="GO" id="GO:0008270">
    <property type="term" value="F:zinc ion binding"/>
    <property type="evidence" value="ECO:0007669"/>
    <property type="project" value="UniProtKB-UniRule"/>
</dbReference>
<dbReference type="CDD" id="cd07717">
    <property type="entry name" value="RNaseZ_ZiPD-like_MBL-fold"/>
    <property type="match status" value="1"/>
</dbReference>
<dbReference type="FunFam" id="3.60.15.10:FF:000002">
    <property type="entry name" value="Ribonuclease Z"/>
    <property type="match status" value="1"/>
</dbReference>
<dbReference type="Gene3D" id="3.60.15.10">
    <property type="entry name" value="Ribonuclease Z/Hydroxyacylglutathione hydrolase-like"/>
    <property type="match status" value="1"/>
</dbReference>
<dbReference type="HAMAP" id="MF_01818">
    <property type="entry name" value="RNase_Z_BN"/>
    <property type="match status" value="1"/>
</dbReference>
<dbReference type="InterPro" id="IPR001279">
    <property type="entry name" value="Metallo-B-lactamas"/>
</dbReference>
<dbReference type="InterPro" id="IPR036866">
    <property type="entry name" value="RibonucZ/Hydroxyglut_hydro"/>
</dbReference>
<dbReference type="InterPro" id="IPR013471">
    <property type="entry name" value="RNase_Z/BN"/>
</dbReference>
<dbReference type="NCBIfam" id="NF000801">
    <property type="entry name" value="PRK00055.1-3"/>
    <property type="match status" value="1"/>
</dbReference>
<dbReference type="NCBIfam" id="TIGR02651">
    <property type="entry name" value="RNase_Z"/>
    <property type="match status" value="1"/>
</dbReference>
<dbReference type="PANTHER" id="PTHR46018">
    <property type="entry name" value="ZINC PHOSPHODIESTERASE ELAC PROTEIN 1"/>
    <property type="match status" value="1"/>
</dbReference>
<dbReference type="PANTHER" id="PTHR46018:SF2">
    <property type="entry name" value="ZINC PHOSPHODIESTERASE ELAC PROTEIN 1"/>
    <property type="match status" value="1"/>
</dbReference>
<dbReference type="Pfam" id="PF00753">
    <property type="entry name" value="Lactamase_B"/>
    <property type="match status" value="1"/>
</dbReference>
<dbReference type="SUPFAM" id="SSF56281">
    <property type="entry name" value="Metallo-hydrolase/oxidoreductase"/>
    <property type="match status" value="1"/>
</dbReference>
<sequence>MELQFLGTGAGQPAKQRNVSSLALKLLDEINEVWMFDCGEGTQRQILETTIKPRKIRKIFITHLHGDHIFGLPGFLSSRSFQASEEQTDLDIYGPIGIKTYVLTSLKVSGARVPYQIHFHEFDDKSLGKIMETDKFVVYAERLAHTIFCMGYRVVQKDLEGTLDAEALKAAGVPFGPLFGKIKNGQDVELEDGRLICAKDYISAPKKGKIITIIGDTRKTSASVKLAKDADVLVHESTYGKGDERIARNHGHSTNMQAAQIAHEAGAKRLLLNHVSARFLGRDCRQMEKDAATIFENVKMVQDLEEVII</sequence>
<name>RNZ_STRP6</name>
<gene>
    <name evidence="1" type="primary">rnz</name>
    <name type="ordered locus">M6_Spy0751</name>
</gene>
<reference key="1">
    <citation type="journal article" date="2004" name="J. Infect. Dis.">
        <title>Progress toward characterization of the group A Streptococcus metagenome: complete genome sequence of a macrolide-resistant serotype M6 strain.</title>
        <authorList>
            <person name="Banks D.J."/>
            <person name="Porcella S.F."/>
            <person name="Barbian K.D."/>
            <person name="Beres S.B."/>
            <person name="Philips L.E."/>
            <person name="Voyich J.M."/>
            <person name="DeLeo F.R."/>
            <person name="Martin J.M."/>
            <person name="Somerville G.A."/>
            <person name="Musser J.M."/>
        </authorList>
    </citation>
    <scope>NUCLEOTIDE SEQUENCE [LARGE SCALE GENOMIC DNA]</scope>
    <source>
        <strain>ATCC BAA-946 / MGAS10394</strain>
    </source>
</reference>
<accession>Q5XCH7</accession>